<comment type="function">
    <text evidence="1">One of the primary rRNA binding proteins, it binds specifically to the 5'-end of 16S ribosomal RNA.</text>
</comment>
<comment type="subunit">
    <text evidence="1">Part of the 30S ribosomal subunit.</text>
</comment>
<comment type="similarity">
    <text evidence="1">Belongs to the universal ribosomal protein uS17 family.</text>
</comment>
<proteinExistence type="inferred from homology"/>
<dbReference type="EMBL" id="CP001011">
    <property type="protein sequence ID" value="ACB91889.1"/>
    <property type="molecule type" value="Genomic_DNA"/>
</dbReference>
<dbReference type="RefSeq" id="WP_004090110.1">
    <property type="nucleotide sequence ID" value="NC_010577.1"/>
</dbReference>
<dbReference type="SMR" id="B2I8H8"/>
<dbReference type="GeneID" id="93904148"/>
<dbReference type="KEGG" id="xfn:XfasM23_0442"/>
<dbReference type="HOGENOM" id="CLU_073626_1_1_6"/>
<dbReference type="Proteomes" id="UP000001698">
    <property type="component" value="Chromosome"/>
</dbReference>
<dbReference type="GO" id="GO:0022627">
    <property type="term" value="C:cytosolic small ribosomal subunit"/>
    <property type="evidence" value="ECO:0007669"/>
    <property type="project" value="TreeGrafter"/>
</dbReference>
<dbReference type="GO" id="GO:0019843">
    <property type="term" value="F:rRNA binding"/>
    <property type="evidence" value="ECO:0007669"/>
    <property type="project" value="UniProtKB-UniRule"/>
</dbReference>
<dbReference type="GO" id="GO:0003735">
    <property type="term" value="F:structural constituent of ribosome"/>
    <property type="evidence" value="ECO:0007669"/>
    <property type="project" value="InterPro"/>
</dbReference>
<dbReference type="GO" id="GO:0006412">
    <property type="term" value="P:translation"/>
    <property type="evidence" value="ECO:0007669"/>
    <property type="project" value="UniProtKB-UniRule"/>
</dbReference>
<dbReference type="CDD" id="cd00364">
    <property type="entry name" value="Ribosomal_uS17"/>
    <property type="match status" value="1"/>
</dbReference>
<dbReference type="Gene3D" id="2.40.50.140">
    <property type="entry name" value="Nucleic acid-binding proteins"/>
    <property type="match status" value="1"/>
</dbReference>
<dbReference type="HAMAP" id="MF_01345_B">
    <property type="entry name" value="Ribosomal_uS17_B"/>
    <property type="match status" value="1"/>
</dbReference>
<dbReference type="InterPro" id="IPR012340">
    <property type="entry name" value="NA-bd_OB-fold"/>
</dbReference>
<dbReference type="InterPro" id="IPR000266">
    <property type="entry name" value="Ribosomal_uS17"/>
</dbReference>
<dbReference type="InterPro" id="IPR019984">
    <property type="entry name" value="Ribosomal_uS17_bact/chlr"/>
</dbReference>
<dbReference type="NCBIfam" id="NF004123">
    <property type="entry name" value="PRK05610.1"/>
    <property type="match status" value="1"/>
</dbReference>
<dbReference type="NCBIfam" id="TIGR03635">
    <property type="entry name" value="uS17_bact"/>
    <property type="match status" value="1"/>
</dbReference>
<dbReference type="PANTHER" id="PTHR10744">
    <property type="entry name" value="40S RIBOSOMAL PROTEIN S11 FAMILY MEMBER"/>
    <property type="match status" value="1"/>
</dbReference>
<dbReference type="PANTHER" id="PTHR10744:SF1">
    <property type="entry name" value="SMALL RIBOSOMAL SUBUNIT PROTEIN US17M"/>
    <property type="match status" value="1"/>
</dbReference>
<dbReference type="Pfam" id="PF00366">
    <property type="entry name" value="Ribosomal_S17"/>
    <property type="match status" value="1"/>
</dbReference>
<dbReference type="PRINTS" id="PR00973">
    <property type="entry name" value="RIBOSOMALS17"/>
</dbReference>
<dbReference type="SUPFAM" id="SSF50249">
    <property type="entry name" value="Nucleic acid-binding proteins"/>
    <property type="match status" value="1"/>
</dbReference>
<organism>
    <name type="scientific">Xylella fastidiosa (strain M23)</name>
    <dbReference type="NCBI Taxonomy" id="405441"/>
    <lineage>
        <taxon>Bacteria</taxon>
        <taxon>Pseudomonadati</taxon>
        <taxon>Pseudomonadota</taxon>
        <taxon>Gammaproteobacteria</taxon>
        <taxon>Lysobacterales</taxon>
        <taxon>Lysobacteraceae</taxon>
        <taxon>Xylella</taxon>
    </lineage>
</organism>
<feature type="chain" id="PRO_1000143325" description="Small ribosomal subunit protein uS17">
    <location>
        <begin position="1"/>
        <end position="88"/>
    </location>
</feature>
<protein>
    <recommendedName>
        <fullName evidence="1">Small ribosomal subunit protein uS17</fullName>
    </recommendedName>
    <alternativeName>
        <fullName evidence="2">30S ribosomal protein S17</fullName>
    </alternativeName>
</protein>
<keyword id="KW-0687">Ribonucleoprotein</keyword>
<keyword id="KW-0689">Ribosomal protein</keyword>
<keyword id="KW-0694">RNA-binding</keyword>
<keyword id="KW-0699">rRNA-binding</keyword>
<gene>
    <name evidence="1" type="primary">rpsQ</name>
    <name type="ordered locus">XfasM23_0442</name>
</gene>
<accession>B2I8H8</accession>
<name>RS17_XYLF2</name>
<sequence>MNDNNERKPLRTIKGLVISNKMQKTVTVLVERQIKHALYGKYIKRSTKLHAHDADDLCNEGDVVLMTEVAPISKTKNWRVVEIVARSD</sequence>
<evidence type="ECO:0000255" key="1">
    <source>
        <dbReference type="HAMAP-Rule" id="MF_01345"/>
    </source>
</evidence>
<evidence type="ECO:0000305" key="2"/>
<reference key="1">
    <citation type="journal article" date="2010" name="J. Bacteriol.">
        <title>Whole genome sequences of two Xylella fastidiosa strains (M12 and M23) causing almond leaf scorch disease in California.</title>
        <authorList>
            <person name="Chen J."/>
            <person name="Xie G."/>
            <person name="Han S."/>
            <person name="Chertkov O."/>
            <person name="Sims D."/>
            <person name="Civerolo E.L."/>
        </authorList>
    </citation>
    <scope>NUCLEOTIDE SEQUENCE [LARGE SCALE GENOMIC DNA]</scope>
    <source>
        <strain>M23</strain>
    </source>
</reference>